<gene>
    <name evidence="1" type="primary">psbB</name>
</gene>
<accession>Q4FFM9</accession>
<dbReference type="EMBL" id="DQ069652">
    <property type="protein sequence ID" value="AAZ04084.1"/>
    <property type="molecule type" value="Genomic_DNA"/>
</dbReference>
<dbReference type="EMBL" id="DQ359689">
    <property type="protein sequence ID" value="ABC70782.1"/>
    <property type="molecule type" value="Genomic_DNA"/>
</dbReference>
<dbReference type="RefSeq" id="YP_001004212.1">
    <property type="nucleotide sequence ID" value="NC_008796.1"/>
</dbReference>
<dbReference type="SMR" id="Q4FFM9"/>
<dbReference type="GeneID" id="4712202"/>
<dbReference type="GO" id="GO:0009535">
    <property type="term" value="C:chloroplast thylakoid membrane"/>
    <property type="evidence" value="ECO:0007669"/>
    <property type="project" value="UniProtKB-SubCell"/>
</dbReference>
<dbReference type="GO" id="GO:0009523">
    <property type="term" value="C:photosystem II"/>
    <property type="evidence" value="ECO:0007669"/>
    <property type="project" value="UniProtKB-KW"/>
</dbReference>
<dbReference type="GO" id="GO:0016168">
    <property type="term" value="F:chlorophyll binding"/>
    <property type="evidence" value="ECO:0007669"/>
    <property type="project" value="UniProtKB-UniRule"/>
</dbReference>
<dbReference type="GO" id="GO:0045156">
    <property type="term" value="F:electron transporter, transferring electrons within the cyclic electron transport pathway of photosynthesis activity"/>
    <property type="evidence" value="ECO:0007669"/>
    <property type="project" value="InterPro"/>
</dbReference>
<dbReference type="GO" id="GO:0009772">
    <property type="term" value="P:photosynthetic electron transport in photosystem II"/>
    <property type="evidence" value="ECO:0007669"/>
    <property type="project" value="InterPro"/>
</dbReference>
<dbReference type="FunFam" id="3.10.680.10:FF:000001">
    <property type="entry name" value="Photosystem II CP47 reaction center protein"/>
    <property type="match status" value="1"/>
</dbReference>
<dbReference type="Gene3D" id="3.10.680.10">
    <property type="entry name" value="Photosystem II CP47 reaction center protein"/>
    <property type="match status" value="1"/>
</dbReference>
<dbReference type="HAMAP" id="MF_01495">
    <property type="entry name" value="PSII_PsbB_CP47"/>
    <property type="match status" value="1"/>
</dbReference>
<dbReference type="InterPro" id="IPR000932">
    <property type="entry name" value="PS_antenna-like"/>
</dbReference>
<dbReference type="InterPro" id="IPR036001">
    <property type="entry name" value="PS_II_antenna-like_sf"/>
</dbReference>
<dbReference type="InterPro" id="IPR017486">
    <property type="entry name" value="PSII_PsbB"/>
</dbReference>
<dbReference type="NCBIfam" id="TIGR03039">
    <property type="entry name" value="PS_II_CP47"/>
    <property type="match status" value="1"/>
</dbReference>
<dbReference type="PANTHER" id="PTHR33180">
    <property type="entry name" value="PHOTOSYSTEM II CP43 REACTION CENTER PROTEIN"/>
    <property type="match status" value="1"/>
</dbReference>
<dbReference type="PANTHER" id="PTHR33180:SF35">
    <property type="entry name" value="PHOTOSYSTEM II CP47 REACTION CENTER PROTEIN"/>
    <property type="match status" value="1"/>
</dbReference>
<dbReference type="Pfam" id="PF00421">
    <property type="entry name" value="PSII"/>
    <property type="match status" value="1"/>
</dbReference>
<dbReference type="SUPFAM" id="SSF161077">
    <property type="entry name" value="Photosystem II antenna protein-like"/>
    <property type="match status" value="1"/>
</dbReference>
<sequence>MGLPWYRVHTVVLNDPGRLLAVHIMHTALVSGWAGSMALYELAVFDPSDPVLDPMWRQGMFVIPFMTRLGITNSWGGWSITGGTITNPGIWSYEGVAGAHIVFSGLCFLAAIWHWVYWDLQIFCDERTGKPSLDLPKIFGIHLFLSGLACFGFGAFHVTGLYGPGIWVSDPYGLTGKVQSVNPAWGVEGFDPFVPGGIASHHIAAGTLGILAGLFHLSVRPPQRLYKGLRMGNIETVLSSSIAAVFFAAFVVAGTMWYGSATTPIELFGPTRYQWDQGYFQQEIYRRVGAGLAENKSLSDVWSKIPEKLAFYDYIGNNPAKGGLFRAGSMDNGDGIAVGWLGHPIFRDKEGRELFVRRMPTFFETFPVVLVDGDGIVRADVPFRRAESKYSVEQVGVTVEFYGGELDGVSYSDPATVKKYARRAQLGEIFELDRATLKSDGVFRSSPRGWFTFGHASFALLFFFGHIWHGARTLFRDVFAGIDPDLDAQVEFGAFQKLGDPTTKRQVV</sequence>
<geneLocation type="chloroplast"/>
<name>PSBB_RANMC</name>
<protein>
    <recommendedName>
        <fullName evidence="1">Photosystem II CP47 reaction center protein</fullName>
    </recommendedName>
    <alternativeName>
        <fullName evidence="1">PSII 47 kDa protein</fullName>
    </alternativeName>
    <alternativeName>
        <fullName evidence="1">Protein CP-47</fullName>
    </alternativeName>
</protein>
<evidence type="ECO:0000255" key="1">
    <source>
        <dbReference type="HAMAP-Rule" id="MF_01495"/>
    </source>
</evidence>
<feature type="chain" id="PRO_0000359861" description="Photosystem II CP47 reaction center protein">
    <location>
        <begin position="1"/>
        <end position="508"/>
    </location>
</feature>
<feature type="transmembrane region" description="Helical" evidence="1">
    <location>
        <begin position="21"/>
        <end position="36"/>
    </location>
</feature>
<feature type="transmembrane region" description="Helical" evidence="1">
    <location>
        <begin position="101"/>
        <end position="115"/>
    </location>
</feature>
<feature type="transmembrane region" description="Helical" evidence="1">
    <location>
        <begin position="140"/>
        <end position="156"/>
    </location>
</feature>
<feature type="transmembrane region" description="Helical" evidence="1">
    <location>
        <begin position="203"/>
        <end position="218"/>
    </location>
</feature>
<feature type="transmembrane region" description="Helical" evidence="1">
    <location>
        <begin position="237"/>
        <end position="252"/>
    </location>
</feature>
<feature type="transmembrane region" description="Helical" evidence="1">
    <location>
        <begin position="457"/>
        <end position="472"/>
    </location>
</feature>
<keyword id="KW-0148">Chlorophyll</keyword>
<keyword id="KW-0150">Chloroplast</keyword>
<keyword id="KW-0157">Chromophore</keyword>
<keyword id="KW-0472">Membrane</keyword>
<keyword id="KW-0602">Photosynthesis</keyword>
<keyword id="KW-0604">Photosystem II</keyword>
<keyword id="KW-0934">Plastid</keyword>
<keyword id="KW-0793">Thylakoid</keyword>
<keyword id="KW-0812">Transmembrane</keyword>
<keyword id="KW-1133">Transmembrane helix</keyword>
<reference key="1">
    <citation type="journal article" date="2005" name="Mol. Biol. Evol.">
        <title>Identifying the basal angiosperm node in chloroplast genome phylogenies: sampling one's way out of the Felsenstein zone.</title>
        <authorList>
            <person name="Leebens-Mack J."/>
            <person name="Raubeson L.A."/>
            <person name="Cui L."/>
            <person name="Kuehl J.V."/>
            <person name="Fourcade M.H."/>
            <person name="Chumley T.W."/>
            <person name="Boore J.L."/>
            <person name="Jansen R.K."/>
            <person name="dePamphilis C.W."/>
        </authorList>
    </citation>
    <scope>NUCLEOTIDE SEQUENCE [GENOMIC DNA]</scope>
</reference>
<reference key="2">
    <citation type="journal article" date="2007" name="BMC Genomics">
        <title>Comparative chloroplast genomics: analyses including new sequences from the angiosperms Nuphar advena and Ranunculus macranthus.</title>
        <authorList>
            <person name="Raubeson L.A."/>
            <person name="Peery R."/>
            <person name="Chumley T.W."/>
            <person name="Dziubek C."/>
            <person name="Fourcade H.M."/>
            <person name="Boore J.L."/>
            <person name="Jansen R.K."/>
        </authorList>
    </citation>
    <scope>NUCLEOTIDE SEQUENCE [LARGE SCALE GENOMIC DNA]</scope>
</reference>
<proteinExistence type="inferred from homology"/>
<organism>
    <name type="scientific">Ranunculus macranthus</name>
    <name type="common">Large buttercup</name>
    <dbReference type="NCBI Taxonomy" id="334596"/>
    <lineage>
        <taxon>Eukaryota</taxon>
        <taxon>Viridiplantae</taxon>
        <taxon>Streptophyta</taxon>
        <taxon>Embryophyta</taxon>
        <taxon>Tracheophyta</taxon>
        <taxon>Spermatophyta</taxon>
        <taxon>Magnoliopsida</taxon>
        <taxon>Ranunculales</taxon>
        <taxon>Ranunculaceae</taxon>
        <taxon>Ranunculoideae</taxon>
        <taxon>Ranunculeae</taxon>
        <taxon>Ranunculus</taxon>
    </lineage>
</organism>
<comment type="function">
    <text evidence="1">One of the components of the core complex of photosystem II (PSII). It binds chlorophyll and helps catalyze the primary light-induced photochemical processes of PSII. PSII is a light-driven water:plastoquinone oxidoreductase, using light energy to abstract electrons from H(2)O, generating O(2) and a proton gradient subsequently used for ATP formation.</text>
</comment>
<comment type="cofactor">
    <text evidence="1">Binds multiple chlorophylls. PSII binds additional chlorophylls, carotenoids and specific lipids.</text>
</comment>
<comment type="subunit">
    <text evidence="1">PSII is composed of 1 copy each of membrane proteins PsbA, PsbB, PsbC, PsbD, PsbE, PsbF, PsbH, PsbI, PsbJ, PsbK, PsbL, PsbM, PsbT, PsbX, PsbY, PsbZ, Psb30/Ycf12, at least 3 peripheral proteins of the oxygen-evolving complex and a large number of cofactors. It forms dimeric complexes.</text>
</comment>
<comment type="subcellular location">
    <subcellularLocation>
        <location evidence="1">Plastid</location>
        <location evidence="1">Chloroplast thylakoid membrane</location>
        <topology evidence="1">Multi-pass membrane protein</topology>
    </subcellularLocation>
</comment>
<comment type="similarity">
    <text evidence="1">Belongs to the PsbB/PsbC family. PsbB subfamily.</text>
</comment>